<accession>B8D0D8</accession>
<comment type="function">
    <text evidence="1">One of the primary rRNA binding proteins, it binds directly to 16S rRNA central domain where it helps coordinate assembly of the platform of the 30S subunit.</text>
</comment>
<comment type="subunit">
    <text evidence="1">Part of the 30S ribosomal subunit. Contacts proteins S5 and S12.</text>
</comment>
<comment type="similarity">
    <text evidence="1">Belongs to the universal ribosomal protein uS8 family.</text>
</comment>
<evidence type="ECO:0000255" key="1">
    <source>
        <dbReference type="HAMAP-Rule" id="MF_01302"/>
    </source>
</evidence>
<evidence type="ECO:0000305" key="2"/>
<feature type="chain" id="PRO_1000214254" description="Small ribosomal subunit protein uS8">
    <location>
        <begin position="1"/>
        <end position="132"/>
    </location>
</feature>
<proteinExistence type="inferred from homology"/>
<keyword id="KW-1185">Reference proteome</keyword>
<keyword id="KW-0687">Ribonucleoprotein</keyword>
<keyword id="KW-0689">Ribosomal protein</keyword>
<keyword id="KW-0694">RNA-binding</keyword>
<keyword id="KW-0699">rRNA-binding</keyword>
<protein>
    <recommendedName>
        <fullName evidence="1">Small ribosomal subunit protein uS8</fullName>
    </recommendedName>
    <alternativeName>
        <fullName evidence="2">30S ribosomal protein S8</fullName>
    </alternativeName>
</protein>
<dbReference type="EMBL" id="CP001098">
    <property type="protein sequence ID" value="ACL68892.1"/>
    <property type="molecule type" value="Genomic_DNA"/>
</dbReference>
<dbReference type="RefSeq" id="WP_012635090.1">
    <property type="nucleotide sequence ID" value="NC_011899.1"/>
</dbReference>
<dbReference type="SMR" id="B8D0D8"/>
<dbReference type="STRING" id="373903.Hore_01310"/>
<dbReference type="KEGG" id="hor:Hore_01310"/>
<dbReference type="eggNOG" id="COG0096">
    <property type="taxonomic scope" value="Bacteria"/>
</dbReference>
<dbReference type="HOGENOM" id="CLU_098428_0_2_9"/>
<dbReference type="OrthoDB" id="9802617at2"/>
<dbReference type="Proteomes" id="UP000000719">
    <property type="component" value="Chromosome"/>
</dbReference>
<dbReference type="GO" id="GO:1990904">
    <property type="term" value="C:ribonucleoprotein complex"/>
    <property type="evidence" value="ECO:0007669"/>
    <property type="project" value="UniProtKB-KW"/>
</dbReference>
<dbReference type="GO" id="GO:0005840">
    <property type="term" value="C:ribosome"/>
    <property type="evidence" value="ECO:0007669"/>
    <property type="project" value="UniProtKB-KW"/>
</dbReference>
<dbReference type="GO" id="GO:0019843">
    <property type="term" value="F:rRNA binding"/>
    <property type="evidence" value="ECO:0007669"/>
    <property type="project" value="UniProtKB-UniRule"/>
</dbReference>
<dbReference type="GO" id="GO:0003735">
    <property type="term" value="F:structural constituent of ribosome"/>
    <property type="evidence" value="ECO:0007669"/>
    <property type="project" value="InterPro"/>
</dbReference>
<dbReference type="GO" id="GO:0006412">
    <property type="term" value="P:translation"/>
    <property type="evidence" value="ECO:0007669"/>
    <property type="project" value="UniProtKB-UniRule"/>
</dbReference>
<dbReference type="FunFam" id="3.30.1370.30:FF:000002">
    <property type="entry name" value="30S ribosomal protein S8"/>
    <property type="match status" value="1"/>
</dbReference>
<dbReference type="FunFam" id="3.30.1490.10:FF:000001">
    <property type="entry name" value="30S ribosomal protein S8"/>
    <property type="match status" value="1"/>
</dbReference>
<dbReference type="Gene3D" id="3.30.1370.30">
    <property type="match status" value="1"/>
</dbReference>
<dbReference type="Gene3D" id="3.30.1490.10">
    <property type="match status" value="1"/>
</dbReference>
<dbReference type="HAMAP" id="MF_01302_B">
    <property type="entry name" value="Ribosomal_uS8_B"/>
    <property type="match status" value="1"/>
</dbReference>
<dbReference type="InterPro" id="IPR000630">
    <property type="entry name" value="Ribosomal_uS8"/>
</dbReference>
<dbReference type="InterPro" id="IPR047863">
    <property type="entry name" value="Ribosomal_uS8_CS"/>
</dbReference>
<dbReference type="InterPro" id="IPR035987">
    <property type="entry name" value="Ribosomal_uS8_sf"/>
</dbReference>
<dbReference type="NCBIfam" id="NF001109">
    <property type="entry name" value="PRK00136.1"/>
    <property type="match status" value="1"/>
</dbReference>
<dbReference type="PANTHER" id="PTHR11758">
    <property type="entry name" value="40S RIBOSOMAL PROTEIN S15A"/>
    <property type="match status" value="1"/>
</dbReference>
<dbReference type="Pfam" id="PF00410">
    <property type="entry name" value="Ribosomal_S8"/>
    <property type="match status" value="1"/>
</dbReference>
<dbReference type="SUPFAM" id="SSF56047">
    <property type="entry name" value="Ribosomal protein S8"/>
    <property type="match status" value="1"/>
</dbReference>
<dbReference type="PROSITE" id="PS00053">
    <property type="entry name" value="RIBOSOMAL_S8"/>
    <property type="match status" value="1"/>
</dbReference>
<name>RS8_HALOH</name>
<reference key="1">
    <citation type="journal article" date="2009" name="PLoS ONE">
        <title>Genome analysis of the anaerobic thermohalophilic bacterium Halothermothrix orenii.</title>
        <authorList>
            <person name="Mavromatis K."/>
            <person name="Ivanova N."/>
            <person name="Anderson I."/>
            <person name="Lykidis A."/>
            <person name="Hooper S.D."/>
            <person name="Sun H."/>
            <person name="Kunin V."/>
            <person name="Lapidus A."/>
            <person name="Hugenholtz P."/>
            <person name="Patel B."/>
            <person name="Kyrpides N.C."/>
        </authorList>
    </citation>
    <scope>NUCLEOTIDE SEQUENCE [LARGE SCALE GENOMIC DNA]</scope>
    <source>
        <strain>H 168 / OCM 544 / DSM 9562</strain>
    </source>
</reference>
<gene>
    <name evidence="1" type="primary">rpsH</name>
    <name type="ordered locus">Hore_01310</name>
</gene>
<organism>
    <name type="scientific">Halothermothrix orenii (strain H 168 / OCM 544 / DSM 9562)</name>
    <dbReference type="NCBI Taxonomy" id="373903"/>
    <lineage>
        <taxon>Bacteria</taxon>
        <taxon>Bacillati</taxon>
        <taxon>Bacillota</taxon>
        <taxon>Clostridia</taxon>
        <taxon>Halanaerobiales</taxon>
        <taxon>Halothermotrichaceae</taxon>
        <taxon>Halothermothrix</taxon>
    </lineage>
</organism>
<sequence length="132" mass="14745">MNITDPIADMLTRIRNANDTNKDVVNIPASNMKISIARILKEEGYIKDYKVIEKKPQNALRIYLKYSKNGEKVISGLKRISKPGLRVYVKKDEVPKVLGGLGIAVLSTSRGILTDKQARQEGIGGEVLCYVW</sequence>